<evidence type="ECO:0000255" key="1"/>
<evidence type="ECO:0000256" key="2">
    <source>
        <dbReference type="SAM" id="MobiDB-lite"/>
    </source>
</evidence>
<evidence type="ECO:0000269" key="3">
    <source>
    </source>
</evidence>
<evidence type="ECO:0000269" key="4">
    <source>
    </source>
</evidence>
<evidence type="ECO:0000269" key="5">
    <source>
    </source>
</evidence>
<evidence type="ECO:0000303" key="6">
    <source>
    </source>
</evidence>
<evidence type="ECO:0000305" key="7"/>
<evidence type="ECO:0000312" key="8">
    <source>
        <dbReference type="EMBL" id="CCP45413.1"/>
    </source>
</evidence>
<organism>
    <name type="scientific">Mycobacterium tuberculosis (strain ATCC 25618 / H37Rv)</name>
    <dbReference type="NCBI Taxonomy" id="83332"/>
    <lineage>
        <taxon>Bacteria</taxon>
        <taxon>Bacillati</taxon>
        <taxon>Actinomycetota</taxon>
        <taxon>Actinomycetes</taxon>
        <taxon>Mycobacteriales</taxon>
        <taxon>Mycobacteriaceae</taxon>
        <taxon>Mycobacterium</taxon>
        <taxon>Mycobacterium tuberculosis complex</taxon>
    </lineage>
</organism>
<sequence length="461" mass="39311">MSFVNVAPQLVSTAAADAARIGSAINTANTAAAATTQVLAAAQDEVSTAIAALFGSHGQHYQAISAQVAAYQQRFVLALSQAGSTYAVAEAASATPLQNVLDAINAPVQSLTGRPLIGDGANGIDGTGQAGGNGGWLWGNGGNGGSGAPGQAGGAGGAAGLIGNGGAGGAGGQGLPFEAGANGGAGGAGGWLFGNGGAGGNGGIGGAGTNLAIGGHGGNGGNAGLIGAGGTGGAGGTGGGEPSAGASGGNGGNGGNGGLLIGNSGDGGAAGNGAGISQNGPASGFGGNGGHAGTTGLIGNGGNGGAGGAGGDVSADFGGVGFGGQGGNGGAGGLLYGNGGAGGNGGAAGSPGSVTAFGGNGGSGGSGGNGGNALIGNAGAGGSAGAGGNGASAGTAGGSGGDGGKGGNGGSVGLIGNGGNGGNGGAGSLFNGAPGFGGPGGSGGASLLGPPGLAGTNGADG</sequence>
<dbReference type="EC" id="1.2.1.n2" evidence="4"/>
<dbReference type="EMBL" id="AL123456">
    <property type="protein sequence ID" value="CCP45413.1"/>
    <property type="molecule type" value="Genomic_DNA"/>
</dbReference>
<dbReference type="RefSeq" id="WP_009938541.1">
    <property type="nucleotide sequence ID" value="NZ_KK339370.1"/>
</dbReference>
<dbReference type="RefSeq" id="YP_177895.1">
    <property type="nucleotide sequence ID" value="NC_000962.3"/>
</dbReference>
<dbReference type="SMR" id="Q79FC3"/>
<dbReference type="STRING" id="83332.Rv2615c"/>
<dbReference type="PaxDb" id="83332-Rv2615c"/>
<dbReference type="DNASU" id="888215"/>
<dbReference type="GeneID" id="888215"/>
<dbReference type="KEGG" id="mtu:Rv2615c"/>
<dbReference type="KEGG" id="mtv:RVBD_2615c"/>
<dbReference type="PATRIC" id="fig|83332.111.peg.2919"/>
<dbReference type="TubercuList" id="Rv2615c"/>
<dbReference type="eggNOG" id="COG3391">
    <property type="taxonomic scope" value="Bacteria"/>
</dbReference>
<dbReference type="InParanoid" id="Q79FC3"/>
<dbReference type="Proteomes" id="UP000001584">
    <property type="component" value="Chromosome"/>
</dbReference>
<dbReference type="GO" id="GO:0005576">
    <property type="term" value="C:extracellular region"/>
    <property type="evidence" value="ECO:0007669"/>
    <property type="project" value="UniProtKB-KW"/>
</dbReference>
<dbReference type="GO" id="GO:0033650">
    <property type="term" value="C:host cell mitochondrion"/>
    <property type="evidence" value="ECO:0007669"/>
    <property type="project" value="UniProtKB-SubCell"/>
</dbReference>
<dbReference type="GO" id="GO:0005886">
    <property type="term" value="C:plasma membrane"/>
    <property type="evidence" value="ECO:0007669"/>
    <property type="project" value="UniProtKB-SubCell"/>
</dbReference>
<dbReference type="GO" id="GO:0016491">
    <property type="term" value="F:oxidoreductase activity"/>
    <property type="evidence" value="ECO:0007669"/>
    <property type="project" value="UniProtKB-KW"/>
</dbReference>
<dbReference type="Gene3D" id="1.10.287.850">
    <property type="entry name" value="HP0062-like domain"/>
    <property type="match status" value="1"/>
</dbReference>
<dbReference type="InterPro" id="IPR000084">
    <property type="entry name" value="PE-PGRS_N"/>
</dbReference>
<dbReference type="InterPro" id="IPR048996">
    <property type="entry name" value="PGRS_rpt"/>
</dbReference>
<dbReference type="Pfam" id="PF00934">
    <property type="entry name" value="PE"/>
    <property type="match status" value="1"/>
</dbReference>
<dbReference type="Pfam" id="PF21526">
    <property type="entry name" value="PGRS"/>
    <property type="match status" value="1"/>
</dbReference>
<dbReference type="PRINTS" id="PR01228">
    <property type="entry name" value="EGGSHELL"/>
</dbReference>
<dbReference type="SUPFAM" id="SSF140459">
    <property type="entry name" value="PE/PPE dimer-like"/>
    <property type="match status" value="1"/>
</dbReference>
<keyword id="KW-1003">Cell membrane</keyword>
<keyword id="KW-0134">Cell wall</keyword>
<keyword id="KW-1045">Host mitochondrion</keyword>
<keyword id="KW-0472">Membrane</keyword>
<keyword id="KW-0560">Oxidoreductase</keyword>
<keyword id="KW-1185">Reference proteome</keyword>
<keyword id="KW-0964">Secreted</keyword>
<keyword id="KW-0843">Virulence</keyword>
<gene>
    <name evidence="8" type="primary">PE_PGRS45</name>
    <name evidence="8" type="ordered locus">Rv2615c</name>
</gene>
<reference key="1">
    <citation type="journal article" date="1998" name="Nature">
        <title>Deciphering the biology of Mycobacterium tuberculosis from the complete genome sequence.</title>
        <authorList>
            <person name="Cole S.T."/>
            <person name="Brosch R."/>
            <person name="Parkhill J."/>
            <person name="Garnier T."/>
            <person name="Churcher C.M."/>
            <person name="Harris D.E."/>
            <person name="Gordon S.V."/>
            <person name="Eiglmeier K."/>
            <person name="Gas S."/>
            <person name="Barry C.E. III"/>
            <person name="Tekaia F."/>
            <person name="Badcock K."/>
            <person name="Basham D."/>
            <person name="Brown D."/>
            <person name="Chillingworth T."/>
            <person name="Connor R."/>
            <person name="Davies R.M."/>
            <person name="Devlin K."/>
            <person name="Feltwell T."/>
            <person name="Gentles S."/>
            <person name="Hamlin N."/>
            <person name="Holroyd S."/>
            <person name="Hornsby T."/>
            <person name="Jagels K."/>
            <person name="Krogh A."/>
            <person name="McLean J."/>
            <person name="Moule S."/>
            <person name="Murphy L.D."/>
            <person name="Oliver S."/>
            <person name="Osborne J."/>
            <person name="Quail M.A."/>
            <person name="Rajandream M.A."/>
            <person name="Rogers J."/>
            <person name="Rutter S."/>
            <person name="Seeger K."/>
            <person name="Skelton S."/>
            <person name="Squares S."/>
            <person name="Squares R."/>
            <person name="Sulston J.E."/>
            <person name="Taylor K."/>
            <person name="Whitehead S."/>
            <person name="Barrell B.G."/>
        </authorList>
    </citation>
    <scope>NUCLEOTIDE SEQUENCE [LARGE SCALE GENOMIC DNA]</scope>
    <source>
        <strain>ATCC 25618 / H37Rv</strain>
    </source>
</reference>
<reference key="2">
    <citation type="journal article" date="2021" name="J. Microbiol. Biotechnol.">
        <title>Codon optimization, soluble expression and purification of PE_PGRS45 gene from Mycobacterium tuberculosis and preparation of its polyclonal antibody protein.</title>
        <authorList>
            <person name="Xu T."/>
            <person name="Li M."/>
            <person name="Wang C."/>
            <person name="Yuan M."/>
            <person name="Chang X."/>
            <person name="Qian Z."/>
            <person name="Li B."/>
            <person name="Sun M."/>
            <person name="Wang H."/>
        </authorList>
    </citation>
    <scope>EXPRESSION OF MBP-PE_PGRS45 IN E.COLI</scope>
    <scope>IDENTIFICATION OF PE_PGRS45 POLYCLONAL ANTIBODY</scope>
    <source>
        <strain>H37Rv</strain>
    </source>
</reference>
<reference key="3">
    <citation type="journal article" date="2022" name="J. Biomol. Struct. Dyn.">
        <title>Elucidating the function of hypothetical PE_PGRS45 protein of Mycobacterium tuberculosis as an oxido-reductase: a potential target for drug repurposing for the treatment of tuberculosis.</title>
        <authorList>
            <person name="Joshi H."/>
            <person name="Sharma S."/>
            <person name="Sharma M."/>
        </authorList>
    </citation>
    <scope>FUNCTION AS AN OXIDOREDUCTASE</scope>
    <scope>CATALYTIC ACTIVITY</scope>
    <scope>ACTIVITY REGULATION</scope>
    <scope>BIOPHYSICOCHEMICAL PROPERTIES</scope>
    <scope>SUBCELLULAR LOCATION</scope>
    <scope>IDENTIFICATION AS A DRUG TARGET</scope>
    <scope>MOLECULAR DYNAMICS SIMULATIONS</scope>
    <source>
        <strain>H37Rv</strain>
    </source>
</reference>
<reference key="4">
    <citation type="journal article" date="2023" name="Immunol. Cell Biol.">
        <title>PE_PGRS45 (Rv2615c) protein of Mycobacterium tuberculosis perturbs mitochondria of macrophages.</title>
        <authorList>
            <person name="Medha X."/>
            <person name="Priyanka X."/>
            <person name="Sharma S."/>
            <person name="Sharma M."/>
        </authorList>
    </citation>
    <scope>FUNCTION IN VIRULENCE</scope>
    <scope>INTERACTION WITH HOST TIMM23</scope>
    <scope>SUBCELLULAR LOCATION</scope>
    <source>
        <strain>H37Rv</strain>
    </source>
</reference>
<protein>
    <recommendedName>
        <fullName evidence="7">PE-PGRS family protein PE_PGRS45</fullName>
    </recommendedName>
    <alternativeName>
        <fullName evidence="6">NADPH dependent oxido-reductase</fullName>
    </alternativeName>
    <alternativeName>
        <fullName evidence="7">NADPH-dependent fatty acyl-CoA reductase</fullName>
        <ecNumber evidence="4">1.2.1.n2</ecNumber>
    </alternativeName>
</protein>
<name>PG45_MYCTU</name>
<accession>Q79FC3</accession>
<accession>I6Y9U1</accession>
<feature type="chain" id="PRO_0000459408" description="PE-PGRS family protein PE_PGRS45">
    <location>
        <begin position="1"/>
        <end position="461"/>
    </location>
</feature>
<feature type="domain" description="PE" evidence="1">
    <location>
        <begin position="4"/>
        <end position="92"/>
    </location>
</feature>
<feature type="region of interest" description="Disordered" evidence="2">
    <location>
        <begin position="232"/>
        <end position="251"/>
    </location>
</feature>
<feature type="region of interest" description="Disordered" evidence="2">
    <location>
        <begin position="426"/>
        <end position="461"/>
    </location>
</feature>
<feature type="compositionally biased region" description="Gly residues" evidence="2">
    <location>
        <begin position="434"/>
        <end position="446"/>
    </location>
</feature>
<comment type="function">
    <text evidence="5">May be an effector protein that contributes to pathogenesis by targeting host mitochondria, where it modulates host cellular processes (PubMed:37565603). In THP1 macrophages, increases the ADP-to-ATP ratio and increases the cellular ROS levels (PubMed:37565603). Also induces mitochondrial perturbations through membrane depolarization, release of mitochondrial superoxide, up-regulation of expression of host proapoptotic proteins (BAX and BIM) and release of cytochrome C into the cytosol (PubMed:37565603). May bind calcium to increase intracellular calcium influx, which may further lead to mitochondrial perturbations (PubMed:37565603). Mitochondrial perturbations and alteration of Ca(2+) influx are independent but simultaneous events (PubMed:37565603).</text>
</comment>
<comment type="function">
    <text evidence="4">In vitro, shows NADPH-dependent fatty acyl coenzyme A oxidoreductase activity (PubMed:36448553). Can oxidize palmitoyl-CoA, but not glutathione and thiourea (PubMed:36448553).</text>
</comment>
<comment type="catalytic activity">
    <reaction evidence="4">
        <text>hexadecanal + NADP(+) + CoA = hexadecanoyl-CoA + NADPH + H(+)</text>
        <dbReference type="Rhea" id="RHEA:27270"/>
        <dbReference type="ChEBI" id="CHEBI:15378"/>
        <dbReference type="ChEBI" id="CHEBI:17600"/>
        <dbReference type="ChEBI" id="CHEBI:57287"/>
        <dbReference type="ChEBI" id="CHEBI:57379"/>
        <dbReference type="ChEBI" id="CHEBI:57783"/>
        <dbReference type="ChEBI" id="CHEBI:58349"/>
        <dbReference type="EC" id="1.2.1.n2"/>
    </reaction>
</comment>
<comment type="activity regulation">
    <text evidence="4">Oxidoreductase activity is inhibited by the first line anti-tubercular drug isoniazid (INH).</text>
</comment>
<comment type="biophysicochemical properties">
    <kinetics>
        <KM evidence="4">34.85 uM for palmitoyl-CoA</KM>
        <Vmax evidence="4">96.77 nmol/min/mg enzyme</Vmax>
    </kinetics>
</comment>
<comment type="subunit">
    <text evidence="5">Interacts with human TIMM23, which is part of a complex that mediates the translocation of transit peptide-containing proteins across the mitochondrial inner membrane.</text>
</comment>
<comment type="subcellular location">
    <subcellularLocation>
        <location evidence="4">Cell membrane</location>
    </subcellularLocation>
    <subcellularLocation>
        <location evidence="4">Secreted</location>
        <location evidence="4">Cell wall</location>
    </subcellularLocation>
    <subcellularLocation>
        <location evidence="5">Host mitochondrion</location>
    </subcellularLocation>
    <text evidence="4 5">When expressed in M.smegmatis, is predominantly localized in the cell wall and cytoplasmic membrane fractions (PubMed:36448553). Trace amount of protein is also detected in the cytosolic fraction (PubMed:36448553). Localizes within mitochondria of THP1 macrophages (PubMed:37565603).</text>
</comment>
<comment type="miscellaneous">
    <text evidence="4">Was identified as a drug target (PubMed:36448553). Docking and molecular dynamics (MD) simulation studies suggest that PE_PGRS45 could be targeted by drugs used in treatment of other diseases: Entacapone and Tolcapone, which are used in Parkinson's treatment, and Verapamil, used in treatment of hypertension (PubMed:36448553).</text>
</comment>
<comment type="miscellaneous">
    <text evidence="3">Purified PE_PGRS45 can induce New Zealand rabbits to produce high-titer antibodies.</text>
</comment>
<comment type="similarity">
    <text evidence="7">Belongs to the mycobacterial PE family. PGRS subfamily.</text>
</comment>
<proteinExistence type="evidence at protein level"/>